<sequence length="369" mass="41528">MTGAAEKVNLLGMPKAKLEAFFETLGEKRFRAQQVLQWMHQRGVDDFDQMTNMSKSLREQLKEVAEIRGPEVVYDETSKDGTRKWVMRMDNGNSVETVLIPDGERGTLCVSSQIGCSLDCTFCSTGKRGFNRNLTAAEIIGQVWVARRAFMPFDPNDRPITNVVMMGMGEPLLNFENVVDAMNLMMEDLAYGISKRRVTLSTSGVVPALDRLGEVTDVSLAISLHAPNDELRNQLVPLNKKYPIAELLAATRRYLSRLPDKRKATIEYTVIEGVNDQPEHARELVVLLKGLPCKINLIPFNPFPESDFRRPSMNATRRFQTVLNEAGYVTTIRTTRGDDIDAACGQLVGRVEDRTRRSQRYIAVQQVNP</sequence>
<gene>
    <name evidence="1" type="primary">rlmN</name>
    <name type="ordered locus">Maqu_1124</name>
</gene>
<organism>
    <name type="scientific">Marinobacter nauticus (strain ATCC 700491 / DSM 11845 / VT8)</name>
    <name type="common">Marinobacter aquaeolei</name>
    <dbReference type="NCBI Taxonomy" id="351348"/>
    <lineage>
        <taxon>Bacteria</taxon>
        <taxon>Pseudomonadati</taxon>
        <taxon>Pseudomonadota</taxon>
        <taxon>Gammaproteobacteria</taxon>
        <taxon>Pseudomonadales</taxon>
        <taxon>Marinobacteraceae</taxon>
        <taxon>Marinobacter</taxon>
    </lineage>
</organism>
<dbReference type="EC" id="2.1.1.192" evidence="1"/>
<dbReference type="EMBL" id="CP000514">
    <property type="protein sequence ID" value="ABM18216.1"/>
    <property type="molecule type" value="Genomic_DNA"/>
</dbReference>
<dbReference type="RefSeq" id="WP_011784633.1">
    <property type="nucleotide sequence ID" value="NC_008740.1"/>
</dbReference>
<dbReference type="SMR" id="A1TZP7"/>
<dbReference type="STRING" id="351348.Maqu_1124"/>
<dbReference type="GeneID" id="31821562"/>
<dbReference type="KEGG" id="maq:Maqu_1124"/>
<dbReference type="eggNOG" id="COG0820">
    <property type="taxonomic scope" value="Bacteria"/>
</dbReference>
<dbReference type="HOGENOM" id="CLU_029101_0_0_6"/>
<dbReference type="OrthoDB" id="9793973at2"/>
<dbReference type="Proteomes" id="UP000000998">
    <property type="component" value="Chromosome"/>
</dbReference>
<dbReference type="GO" id="GO:0005737">
    <property type="term" value="C:cytoplasm"/>
    <property type="evidence" value="ECO:0007669"/>
    <property type="project" value="UniProtKB-SubCell"/>
</dbReference>
<dbReference type="GO" id="GO:0051539">
    <property type="term" value="F:4 iron, 4 sulfur cluster binding"/>
    <property type="evidence" value="ECO:0007669"/>
    <property type="project" value="UniProtKB-UniRule"/>
</dbReference>
<dbReference type="GO" id="GO:0046872">
    <property type="term" value="F:metal ion binding"/>
    <property type="evidence" value="ECO:0007669"/>
    <property type="project" value="UniProtKB-KW"/>
</dbReference>
<dbReference type="GO" id="GO:0070040">
    <property type="term" value="F:rRNA (adenine(2503)-C2-)-methyltransferase activity"/>
    <property type="evidence" value="ECO:0007669"/>
    <property type="project" value="UniProtKB-UniRule"/>
</dbReference>
<dbReference type="GO" id="GO:0019843">
    <property type="term" value="F:rRNA binding"/>
    <property type="evidence" value="ECO:0007669"/>
    <property type="project" value="UniProtKB-UniRule"/>
</dbReference>
<dbReference type="GO" id="GO:0002935">
    <property type="term" value="F:tRNA (adenine(37)-C2)-methyltransferase activity"/>
    <property type="evidence" value="ECO:0007669"/>
    <property type="project" value="UniProtKB-UniRule"/>
</dbReference>
<dbReference type="GO" id="GO:0000049">
    <property type="term" value="F:tRNA binding"/>
    <property type="evidence" value="ECO:0007669"/>
    <property type="project" value="UniProtKB-UniRule"/>
</dbReference>
<dbReference type="GO" id="GO:0070475">
    <property type="term" value="P:rRNA base methylation"/>
    <property type="evidence" value="ECO:0007669"/>
    <property type="project" value="UniProtKB-UniRule"/>
</dbReference>
<dbReference type="GO" id="GO:0030488">
    <property type="term" value="P:tRNA methylation"/>
    <property type="evidence" value="ECO:0007669"/>
    <property type="project" value="UniProtKB-UniRule"/>
</dbReference>
<dbReference type="CDD" id="cd01335">
    <property type="entry name" value="Radical_SAM"/>
    <property type="match status" value="1"/>
</dbReference>
<dbReference type="FunFam" id="1.10.150.530:FF:000003">
    <property type="entry name" value="Dual-specificity RNA methyltransferase RlmN"/>
    <property type="match status" value="1"/>
</dbReference>
<dbReference type="FunFam" id="3.20.20.70:FF:000008">
    <property type="entry name" value="Dual-specificity RNA methyltransferase RlmN"/>
    <property type="match status" value="1"/>
</dbReference>
<dbReference type="Gene3D" id="1.10.150.530">
    <property type="match status" value="1"/>
</dbReference>
<dbReference type="Gene3D" id="3.20.20.70">
    <property type="entry name" value="Aldolase class I"/>
    <property type="match status" value="1"/>
</dbReference>
<dbReference type="HAMAP" id="MF_01849">
    <property type="entry name" value="RNA_methyltr_RlmN"/>
    <property type="match status" value="1"/>
</dbReference>
<dbReference type="InterPro" id="IPR013785">
    <property type="entry name" value="Aldolase_TIM"/>
</dbReference>
<dbReference type="InterPro" id="IPR040072">
    <property type="entry name" value="Methyltransferase_A"/>
</dbReference>
<dbReference type="InterPro" id="IPR048641">
    <property type="entry name" value="RlmN_N"/>
</dbReference>
<dbReference type="InterPro" id="IPR027492">
    <property type="entry name" value="RNA_MTrfase_RlmN"/>
</dbReference>
<dbReference type="InterPro" id="IPR004383">
    <property type="entry name" value="rRNA_lsu_MTrfase_RlmN/Cfr"/>
</dbReference>
<dbReference type="InterPro" id="IPR007197">
    <property type="entry name" value="rSAM"/>
</dbReference>
<dbReference type="NCBIfam" id="TIGR00048">
    <property type="entry name" value="rRNA_mod_RlmN"/>
    <property type="match status" value="1"/>
</dbReference>
<dbReference type="PANTHER" id="PTHR30544">
    <property type="entry name" value="23S RRNA METHYLTRANSFERASE"/>
    <property type="match status" value="1"/>
</dbReference>
<dbReference type="PANTHER" id="PTHR30544:SF5">
    <property type="entry name" value="RADICAL SAM CORE DOMAIN-CONTAINING PROTEIN"/>
    <property type="match status" value="1"/>
</dbReference>
<dbReference type="Pfam" id="PF04055">
    <property type="entry name" value="Radical_SAM"/>
    <property type="match status" value="1"/>
</dbReference>
<dbReference type="Pfam" id="PF21016">
    <property type="entry name" value="RlmN_N"/>
    <property type="match status" value="1"/>
</dbReference>
<dbReference type="PIRSF" id="PIRSF006004">
    <property type="entry name" value="CHP00048"/>
    <property type="match status" value="1"/>
</dbReference>
<dbReference type="SFLD" id="SFLDF00275">
    <property type="entry name" value="adenosine_C2_methyltransferase"/>
    <property type="match status" value="1"/>
</dbReference>
<dbReference type="SFLD" id="SFLDG01062">
    <property type="entry name" value="methyltransferase_(Class_A)"/>
    <property type="match status" value="1"/>
</dbReference>
<dbReference type="SUPFAM" id="SSF102114">
    <property type="entry name" value="Radical SAM enzymes"/>
    <property type="match status" value="1"/>
</dbReference>
<dbReference type="PROSITE" id="PS51918">
    <property type="entry name" value="RADICAL_SAM"/>
    <property type="match status" value="1"/>
</dbReference>
<comment type="function">
    <text evidence="1">Specifically methylates position 2 of adenine 2503 in 23S rRNA and position 2 of adenine 37 in tRNAs. m2A2503 modification seems to play a crucial role in the proofreading step occurring at the peptidyl transferase center and thus would serve to optimize ribosomal fidelity.</text>
</comment>
<comment type="catalytic activity">
    <reaction evidence="1">
        <text>adenosine(2503) in 23S rRNA + 2 reduced [2Fe-2S]-[ferredoxin] + 2 S-adenosyl-L-methionine = 2-methyladenosine(2503) in 23S rRNA + 5'-deoxyadenosine + L-methionine + 2 oxidized [2Fe-2S]-[ferredoxin] + S-adenosyl-L-homocysteine</text>
        <dbReference type="Rhea" id="RHEA:42916"/>
        <dbReference type="Rhea" id="RHEA-COMP:10000"/>
        <dbReference type="Rhea" id="RHEA-COMP:10001"/>
        <dbReference type="Rhea" id="RHEA-COMP:10152"/>
        <dbReference type="Rhea" id="RHEA-COMP:10282"/>
        <dbReference type="ChEBI" id="CHEBI:17319"/>
        <dbReference type="ChEBI" id="CHEBI:33737"/>
        <dbReference type="ChEBI" id="CHEBI:33738"/>
        <dbReference type="ChEBI" id="CHEBI:57844"/>
        <dbReference type="ChEBI" id="CHEBI:57856"/>
        <dbReference type="ChEBI" id="CHEBI:59789"/>
        <dbReference type="ChEBI" id="CHEBI:74411"/>
        <dbReference type="ChEBI" id="CHEBI:74497"/>
        <dbReference type="EC" id="2.1.1.192"/>
    </reaction>
</comment>
<comment type="catalytic activity">
    <reaction evidence="1">
        <text>adenosine(37) in tRNA + 2 reduced [2Fe-2S]-[ferredoxin] + 2 S-adenosyl-L-methionine = 2-methyladenosine(37) in tRNA + 5'-deoxyadenosine + L-methionine + 2 oxidized [2Fe-2S]-[ferredoxin] + S-adenosyl-L-homocysteine</text>
        <dbReference type="Rhea" id="RHEA:43332"/>
        <dbReference type="Rhea" id="RHEA-COMP:10000"/>
        <dbReference type="Rhea" id="RHEA-COMP:10001"/>
        <dbReference type="Rhea" id="RHEA-COMP:10162"/>
        <dbReference type="Rhea" id="RHEA-COMP:10485"/>
        <dbReference type="ChEBI" id="CHEBI:17319"/>
        <dbReference type="ChEBI" id="CHEBI:33737"/>
        <dbReference type="ChEBI" id="CHEBI:33738"/>
        <dbReference type="ChEBI" id="CHEBI:57844"/>
        <dbReference type="ChEBI" id="CHEBI:57856"/>
        <dbReference type="ChEBI" id="CHEBI:59789"/>
        <dbReference type="ChEBI" id="CHEBI:74411"/>
        <dbReference type="ChEBI" id="CHEBI:74497"/>
        <dbReference type="EC" id="2.1.1.192"/>
    </reaction>
</comment>
<comment type="cofactor">
    <cofactor evidence="1">
        <name>[4Fe-4S] cluster</name>
        <dbReference type="ChEBI" id="CHEBI:49883"/>
    </cofactor>
    <text evidence="1">Binds 1 [4Fe-4S] cluster. The cluster is coordinated with 3 cysteines and an exchangeable S-adenosyl-L-methionine.</text>
</comment>
<comment type="subcellular location">
    <subcellularLocation>
        <location evidence="1">Cytoplasm</location>
    </subcellularLocation>
</comment>
<comment type="miscellaneous">
    <text evidence="1">Reaction proceeds by a ping-pong mechanism involving intermediate methylation of a conserved cysteine residue.</text>
</comment>
<comment type="similarity">
    <text evidence="1">Belongs to the radical SAM superfamily. RlmN family.</text>
</comment>
<reference key="1">
    <citation type="journal article" date="2011" name="Appl. Environ. Microbiol.">
        <title>Genomic potential of Marinobacter aquaeolei, a biogeochemical 'opportunitroph'.</title>
        <authorList>
            <person name="Singer E."/>
            <person name="Webb E.A."/>
            <person name="Nelson W.C."/>
            <person name="Heidelberg J.F."/>
            <person name="Ivanova N."/>
            <person name="Pati A."/>
            <person name="Edwards K.J."/>
        </authorList>
    </citation>
    <scope>NUCLEOTIDE SEQUENCE [LARGE SCALE GENOMIC DNA]</scope>
    <source>
        <strain>ATCC 700491 / DSM 11845 / VT8</strain>
    </source>
</reference>
<name>RLMN_MARN8</name>
<keyword id="KW-0004">4Fe-4S</keyword>
<keyword id="KW-0963">Cytoplasm</keyword>
<keyword id="KW-1015">Disulfide bond</keyword>
<keyword id="KW-0408">Iron</keyword>
<keyword id="KW-0411">Iron-sulfur</keyword>
<keyword id="KW-0479">Metal-binding</keyword>
<keyword id="KW-0489">Methyltransferase</keyword>
<keyword id="KW-0698">rRNA processing</keyword>
<keyword id="KW-0949">S-adenosyl-L-methionine</keyword>
<keyword id="KW-0808">Transferase</keyword>
<keyword id="KW-0819">tRNA processing</keyword>
<evidence type="ECO:0000255" key="1">
    <source>
        <dbReference type="HAMAP-Rule" id="MF_01849"/>
    </source>
</evidence>
<evidence type="ECO:0000255" key="2">
    <source>
        <dbReference type="PROSITE-ProRule" id="PRU01266"/>
    </source>
</evidence>
<protein>
    <recommendedName>
        <fullName evidence="1">Dual-specificity RNA methyltransferase RlmN</fullName>
        <ecNumber evidence="1">2.1.1.192</ecNumber>
    </recommendedName>
    <alternativeName>
        <fullName evidence="1">23S rRNA (adenine(2503)-C(2))-methyltransferase</fullName>
    </alternativeName>
    <alternativeName>
        <fullName evidence="1">23S rRNA m2A2503 methyltransferase</fullName>
    </alternativeName>
    <alternativeName>
        <fullName evidence="1">Ribosomal RNA large subunit methyltransferase N</fullName>
    </alternativeName>
    <alternativeName>
        <fullName evidence="1">tRNA (adenine(37)-C(2))-methyltransferase</fullName>
    </alternativeName>
    <alternativeName>
        <fullName evidence="1">tRNA m2A37 methyltransferase</fullName>
    </alternativeName>
</protein>
<proteinExistence type="inferred from homology"/>
<accession>A1TZP7</accession>
<feature type="chain" id="PRO_0000350247" description="Dual-specificity RNA methyltransferase RlmN">
    <location>
        <begin position="1"/>
        <end position="369"/>
    </location>
</feature>
<feature type="domain" description="Radical SAM core" evidence="2">
    <location>
        <begin position="102"/>
        <end position="338"/>
    </location>
</feature>
<feature type="active site" description="Proton acceptor" evidence="1">
    <location>
        <position position="96"/>
    </location>
</feature>
<feature type="active site" description="S-methylcysteine intermediate" evidence="1">
    <location>
        <position position="344"/>
    </location>
</feature>
<feature type="binding site" evidence="1">
    <location>
        <position position="116"/>
    </location>
    <ligand>
        <name>[4Fe-4S] cluster</name>
        <dbReference type="ChEBI" id="CHEBI:49883"/>
        <note>4Fe-4S-S-AdoMet</note>
    </ligand>
</feature>
<feature type="binding site" evidence="1">
    <location>
        <position position="120"/>
    </location>
    <ligand>
        <name>[4Fe-4S] cluster</name>
        <dbReference type="ChEBI" id="CHEBI:49883"/>
        <note>4Fe-4S-S-AdoMet</note>
    </ligand>
</feature>
<feature type="binding site" evidence="1">
    <location>
        <position position="123"/>
    </location>
    <ligand>
        <name>[4Fe-4S] cluster</name>
        <dbReference type="ChEBI" id="CHEBI:49883"/>
        <note>4Fe-4S-S-AdoMet</note>
    </ligand>
</feature>
<feature type="binding site" evidence="1">
    <location>
        <begin position="169"/>
        <end position="170"/>
    </location>
    <ligand>
        <name>S-adenosyl-L-methionine</name>
        <dbReference type="ChEBI" id="CHEBI:59789"/>
    </ligand>
</feature>
<feature type="binding site" evidence="1">
    <location>
        <position position="201"/>
    </location>
    <ligand>
        <name>S-adenosyl-L-methionine</name>
        <dbReference type="ChEBI" id="CHEBI:59789"/>
    </ligand>
</feature>
<feature type="binding site" evidence="1">
    <location>
        <begin position="223"/>
        <end position="225"/>
    </location>
    <ligand>
        <name>S-adenosyl-L-methionine</name>
        <dbReference type="ChEBI" id="CHEBI:59789"/>
    </ligand>
</feature>
<feature type="binding site" evidence="1">
    <location>
        <position position="301"/>
    </location>
    <ligand>
        <name>S-adenosyl-L-methionine</name>
        <dbReference type="ChEBI" id="CHEBI:59789"/>
    </ligand>
</feature>
<feature type="disulfide bond" description="(transient)" evidence="1">
    <location>
        <begin position="109"/>
        <end position="344"/>
    </location>
</feature>